<evidence type="ECO:0000255" key="1">
    <source>
        <dbReference type="HAMAP-Rule" id="MF_00139"/>
    </source>
</evidence>
<evidence type="ECO:0000255" key="2">
    <source>
        <dbReference type="PROSITE-ProRule" id="PRU01202"/>
    </source>
</evidence>
<dbReference type="EC" id="2.1.2.3" evidence="1"/>
<dbReference type="EC" id="3.5.4.10" evidence="1"/>
<dbReference type="EMBL" id="CP000822">
    <property type="protein sequence ID" value="ABV14083.1"/>
    <property type="molecule type" value="Genomic_DNA"/>
</dbReference>
<dbReference type="RefSeq" id="WP_012133793.1">
    <property type="nucleotide sequence ID" value="NC_009792.1"/>
</dbReference>
<dbReference type="SMR" id="A8AKS0"/>
<dbReference type="STRING" id="290338.CKO_02983"/>
<dbReference type="GeneID" id="45136797"/>
<dbReference type="KEGG" id="cko:CKO_02983"/>
<dbReference type="HOGENOM" id="CLU_016316_5_2_6"/>
<dbReference type="OrthoDB" id="9802065at2"/>
<dbReference type="UniPathway" id="UPA00074">
    <property type="reaction ID" value="UER00133"/>
</dbReference>
<dbReference type="UniPathway" id="UPA00074">
    <property type="reaction ID" value="UER00135"/>
</dbReference>
<dbReference type="Proteomes" id="UP000008148">
    <property type="component" value="Chromosome"/>
</dbReference>
<dbReference type="GO" id="GO:0005829">
    <property type="term" value="C:cytosol"/>
    <property type="evidence" value="ECO:0007669"/>
    <property type="project" value="TreeGrafter"/>
</dbReference>
<dbReference type="GO" id="GO:0003937">
    <property type="term" value="F:IMP cyclohydrolase activity"/>
    <property type="evidence" value="ECO:0007669"/>
    <property type="project" value="UniProtKB-UniRule"/>
</dbReference>
<dbReference type="GO" id="GO:0004643">
    <property type="term" value="F:phosphoribosylaminoimidazolecarboxamide formyltransferase activity"/>
    <property type="evidence" value="ECO:0007669"/>
    <property type="project" value="UniProtKB-UniRule"/>
</dbReference>
<dbReference type="GO" id="GO:0006189">
    <property type="term" value="P:'de novo' IMP biosynthetic process"/>
    <property type="evidence" value="ECO:0007669"/>
    <property type="project" value="UniProtKB-UniRule"/>
</dbReference>
<dbReference type="CDD" id="cd01421">
    <property type="entry name" value="IMPCH"/>
    <property type="match status" value="1"/>
</dbReference>
<dbReference type="FunFam" id="3.40.140.20:FF:000001">
    <property type="entry name" value="Bifunctional purine biosynthesis protein PurH"/>
    <property type="match status" value="1"/>
</dbReference>
<dbReference type="FunFam" id="3.40.140.20:FF:000002">
    <property type="entry name" value="Bifunctional purine biosynthesis protein PurH"/>
    <property type="match status" value="1"/>
</dbReference>
<dbReference type="FunFam" id="3.40.50.1380:FF:000001">
    <property type="entry name" value="Bifunctional purine biosynthesis protein PurH"/>
    <property type="match status" value="1"/>
</dbReference>
<dbReference type="Gene3D" id="3.40.140.20">
    <property type="match status" value="2"/>
</dbReference>
<dbReference type="Gene3D" id="3.40.50.1380">
    <property type="entry name" value="Methylglyoxal synthase-like domain"/>
    <property type="match status" value="1"/>
</dbReference>
<dbReference type="HAMAP" id="MF_00139">
    <property type="entry name" value="PurH"/>
    <property type="match status" value="1"/>
</dbReference>
<dbReference type="InterPro" id="IPR024051">
    <property type="entry name" value="AICAR_Tfase_dup_dom_sf"/>
</dbReference>
<dbReference type="InterPro" id="IPR016193">
    <property type="entry name" value="Cytidine_deaminase-like"/>
</dbReference>
<dbReference type="InterPro" id="IPR011607">
    <property type="entry name" value="MGS-like_dom"/>
</dbReference>
<dbReference type="InterPro" id="IPR036914">
    <property type="entry name" value="MGS-like_dom_sf"/>
</dbReference>
<dbReference type="InterPro" id="IPR002695">
    <property type="entry name" value="PurH-like"/>
</dbReference>
<dbReference type="NCBIfam" id="NF002049">
    <property type="entry name" value="PRK00881.1"/>
    <property type="match status" value="1"/>
</dbReference>
<dbReference type="NCBIfam" id="TIGR00355">
    <property type="entry name" value="purH"/>
    <property type="match status" value="1"/>
</dbReference>
<dbReference type="PANTHER" id="PTHR11692:SF0">
    <property type="entry name" value="BIFUNCTIONAL PURINE BIOSYNTHESIS PROTEIN ATIC"/>
    <property type="match status" value="1"/>
</dbReference>
<dbReference type="PANTHER" id="PTHR11692">
    <property type="entry name" value="BIFUNCTIONAL PURINE BIOSYNTHESIS PROTEIN PURH"/>
    <property type="match status" value="1"/>
</dbReference>
<dbReference type="Pfam" id="PF01808">
    <property type="entry name" value="AICARFT_IMPCHas"/>
    <property type="match status" value="1"/>
</dbReference>
<dbReference type="Pfam" id="PF02142">
    <property type="entry name" value="MGS"/>
    <property type="match status" value="1"/>
</dbReference>
<dbReference type="PIRSF" id="PIRSF000414">
    <property type="entry name" value="AICARFT_IMPCHas"/>
    <property type="match status" value="1"/>
</dbReference>
<dbReference type="SMART" id="SM00798">
    <property type="entry name" value="AICARFT_IMPCHas"/>
    <property type="match status" value="1"/>
</dbReference>
<dbReference type="SMART" id="SM00851">
    <property type="entry name" value="MGS"/>
    <property type="match status" value="1"/>
</dbReference>
<dbReference type="SUPFAM" id="SSF53927">
    <property type="entry name" value="Cytidine deaminase-like"/>
    <property type="match status" value="1"/>
</dbReference>
<dbReference type="SUPFAM" id="SSF52335">
    <property type="entry name" value="Methylglyoxal synthase-like"/>
    <property type="match status" value="1"/>
</dbReference>
<dbReference type="PROSITE" id="PS51855">
    <property type="entry name" value="MGS"/>
    <property type="match status" value="1"/>
</dbReference>
<sequence length="529" mass="57264">MQQRRPVRRALLSVSDKAGIVEFAQALSARGVELLSTGGTARLLADKGLPVTEVSDYTGFPEMMDGRVKTLHPKVHGGILGRRGQDDGIMEQHGIAPIDMVVVNLYPFAQTVAREGCSLEDAVENIDIGGPTMVRSAAKNHKDVAIVVKSSDYDAIIKEMDSNDGSLTLDTRFDLAIKAFEHTAAYDSMIANYFGSMVPAYHGESKEAAGRFPRTLNLNFIKKQDMRYGENSHQQAAFYIEENVQEASVATAQQVQGKALSYNNIADTDAALECVKEFSEPACVIVKHANPCGVAVSTSILDAYDRAYKTDPTSAFGGIIAFNRELDAETAQAIISRQFVEVIIAPSASEDALKITAAKQNVRVLTCGQWAERVPGLDFKRVNGGLLVQDRDLGMVTEGELRVVSKRQPTEQELRDALFCWKVAKFVKSNAIVYAKENMTIGIGAGQMSRVYSAKIAGIKAGDEGLEVKGSAMASDAFFPFRDGIDAAAAVGVSCVIQPGGSIRDDEVIAAADEHGIAMIFTDMRHFRH</sequence>
<feature type="chain" id="PRO_1000018874" description="Bifunctional purine biosynthesis protein PurH">
    <location>
        <begin position="1"/>
        <end position="529"/>
    </location>
</feature>
<feature type="domain" description="MGS-like" evidence="2">
    <location>
        <begin position="1"/>
        <end position="148"/>
    </location>
</feature>
<accession>A8AKS0</accession>
<gene>
    <name evidence="1" type="primary">purH</name>
    <name type="ordered locus">CKO_02983</name>
</gene>
<organism>
    <name type="scientific">Citrobacter koseri (strain ATCC BAA-895 / CDC 4225-83 / SGSC4696)</name>
    <dbReference type="NCBI Taxonomy" id="290338"/>
    <lineage>
        <taxon>Bacteria</taxon>
        <taxon>Pseudomonadati</taxon>
        <taxon>Pseudomonadota</taxon>
        <taxon>Gammaproteobacteria</taxon>
        <taxon>Enterobacterales</taxon>
        <taxon>Enterobacteriaceae</taxon>
        <taxon>Citrobacter</taxon>
    </lineage>
</organism>
<protein>
    <recommendedName>
        <fullName evidence="1">Bifunctional purine biosynthesis protein PurH</fullName>
    </recommendedName>
    <domain>
        <recommendedName>
            <fullName evidence="1">Phosphoribosylaminoimidazolecarboxamide formyltransferase</fullName>
            <ecNumber evidence="1">2.1.2.3</ecNumber>
        </recommendedName>
        <alternativeName>
            <fullName evidence="1">AICAR transformylase</fullName>
        </alternativeName>
    </domain>
    <domain>
        <recommendedName>
            <fullName evidence="1">IMP cyclohydrolase</fullName>
            <ecNumber evidence="1">3.5.4.10</ecNumber>
        </recommendedName>
        <alternativeName>
            <fullName evidence="1">ATIC</fullName>
        </alternativeName>
        <alternativeName>
            <fullName evidence="1">IMP synthase</fullName>
        </alternativeName>
        <alternativeName>
            <fullName evidence="1">Inosinicase</fullName>
        </alternativeName>
    </domain>
</protein>
<name>PUR9_CITK8</name>
<reference key="1">
    <citation type="submission" date="2007-08" db="EMBL/GenBank/DDBJ databases">
        <authorList>
            <consortium name="The Citrobacter koseri Genome Sequencing Project"/>
            <person name="McClelland M."/>
            <person name="Sanderson E.K."/>
            <person name="Porwollik S."/>
            <person name="Spieth J."/>
            <person name="Clifton W.S."/>
            <person name="Latreille P."/>
            <person name="Courtney L."/>
            <person name="Wang C."/>
            <person name="Pepin K."/>
            <person name="Bhonagiri V."/>
            <person name="Nash W."/>
            <person name="Johnson M."/>
            <person name="Thiruvilangam P."/>
            <person name="Wilson R."/>
        </authorList>
    </citation>
    <scope>NUCLEOTIDE SEQUENCE [LARGE SCALE GENOMIC DNA]</scope>
    <source>
        <strain>ATCC BAA-895 / CDC 4225-83 / SGSC4696</strain>
    </source>
</reference>
<comment type="catalytic activity">
    <reaction evidence="1">
        <text>(6R)-10-formyltetrahydrofolate + 5-amino-1-(5-phospho-beta-D-ribosyl)imidazole-4-carboxamide = 5-formamido-1-(5-phospho-D-ribosyl)imidazole-4-carboxamide + (6S)-5,6,7,8-tetrahydrofolate</text>
        <dbReference type="Rhea" id="RHEA:22192"/>
        <dbReference type="ChEBI" id="CHEBI:57453"/>
        <dbReference type="ChEBI" id="CHEBI:58467"/>
        <dbReference type="ChEBI" id="CHEBI:58475"/>
        <dbReference type="ChEBI" id="CHEBI:195366"/>
        <dbReference type="EC" id="2.1.2.3"/>
    </reaction>
</comment>
<comment type="catalytic activity">
    <reaction evidence="1">
        <text>IMP + H2O = 5-formamido-1-(5-phospho-D-ribosyl)imidazole-4-carboxamide</text>
        <dbReference type="Rhea" id="RHEA:18445"/>
        <dbReference type="ChEBI" id="CHEBI:15377"/>
        <dbReference type="ChEBI" id="CHEBI:58053"/>
        <dbReference type="ChEBI" id="CHEBI:58467"/>
        <dbReference type="EC" id="3.5.4.10"/>
    </reaction>
</comment>
<comment type="pathway">
    <text evidence="1">Purine metabolism; IMP biosynthesis via de novo pathway; 5-formamido-1-(5-phospho-D-ribosyl)imidazole-4-carboxamide from 5-amino-1-(5-phospho-D-ribosyl)imidazole-4-carboxamide (10-formyl THF route): step 1/1.</text>
</comment>
<comment type="pathway">
    <text evidence="1">Purine metabolism; IMP biosynthesis via de novo pathway; IMP from 5-formamido-1-(5-phospho-D-ribosyl)imidazole-4-carboxamide: step 1/1.</text>
</comment>
<comment type="domain">
    <text evidence="1">The IMP cyclohydrolase activity resides in the N-terminal region.</text>
</comment>
<comment type="similarity">
    <text evidence="1">Belongs to the PurH family.</text>
</comment>
<keyword id="KW-0378">Hydrolase</keyword>
<keyword id="KW-0511">Multifunctional enzyme</keyword>
<keyword id="KW-0658">Purine biosynthesis</keyword>
<keyword id="KW-1185">Reference proteome</keyword>
<keyword id="KW-0808">Transferase</keyword>
<proteinExistence type="inferred from homology"/>